<gene>
    <name evidence="2" type="primary">tal</name>
    <name type="ordered locus">APL_0062</name>
</gene>
<reference key="1">
    <citation type="journal article" date="2008" name="J. Bacteriol.">
        <title>The complete genome sequence of Actinobacillus pleuropneumoniae L20 (serotype 5b).</title>
        <authorList>
            <person name="Foote S.J."/>
            <person name="Bosse J.T."/>
            <person name="Bouevitch A.B."/>
            <person name="Langford P.R."/>
            <person name="Young N.M."/>
            <person name="Nash J.H.E."/>
        </authorList>
    </citation>
    <scope>NUCLEOTIDE SEQUENCE [LARGE SCALE GENOMIC DNA]</scope>
    <source>
        <strain>L20</strain>
    </source>
</reference>
<accession>A3MYD4</accession>
<sequence>MSQLDALREMTVVVADTGDIEAIKQYQPQDATTNPSLILSASALPQYASLIDDAVAYAKARSDDKAQLLIDAEDKLAVNIGLEILKIVPGRISTEVDARLSYDTKATIEKARQIMKLYNDAGISNDRILIKIASTWQGIRAAEVLEKEGINCNLTLLFSQAQARACAKAGVYLISPFVGRILDWYKAAEKKEYAPAEDPGVISVTNIYNYYKQYGYQTVVMGASFRNVGEITEIAGCDRLTIAPPLLKELAESNAPLVRKLEYKGEVKTRPAPLTEAEFYWQHNQDPMAVEKLAEGIRKFAVDIEKLEAMLAAKL</sequence>
<name>TAL_ACTP2</name>
<proteinExistence type="inferred from homology"/>
<protein>
    <recommendedName>
        <fullName evidence="2">Transaldolase</fullName>
        <ecNumber evidence="2">2.2.1.2</ecNumber>
    </recommendedName>
</protein>
<evidence type="ECO:0000250" key="1"/>
<evidence type="ECO:0000255" key="2">
    <source>
        <dbReference type="HAMAP-Rule" id="MF_00492"/>
    </source>
</evidence>
<dbReference type="EC" id="2.2.1.2" evidence="2"/>
<dbReference type="EMBL" id="CP000569">
    <property type="protein sequence ID" value="ABN73170.1"/>
    <property type="molecule type" value="Genomic_DNA"/>
</dbReference>
<dbReference type="RefSeq" id="WP_011848304.1">
    <property type="nucleotide sequence ID" value="NC_009053.1"/>
</dbReference>
<dbReference type="SMR" id="A3MYD4"/>
<dbReference type="STRING" id="416269.APL_0062"/>
<dbReference type="EnsemblBacteria" id="ABN73170">
    <property type="protein sequence ID" value="ABN73170"/>
    <property type="gene ID" value="APL_0062"/>
</dbReference>
<dbReference type="KEGG" id="apl:APL_0062"/>
<dbReference type="PATRIC" id="fig|416269.6.peg.64"/>
<dbReference type="eggNOG" id="COG0176">
    <property type="taxonomic scope" value="Bacteria"/>
</dbReference>
<dbReference type="HOGENOM" id="CLU_047470_0_1_6"/>
<dbReference type="UniPathway" id="UPA00115">
    <property type="reaction ID" value="UER00414"/>
</dbReference>
<dbReference type="Proteomes" id="UP000001432">
    <property type="component" value="Chromosome"/>
</dbReference>
<dbReference type="GO" id="GO:0005829">
    <property type="term" value="C:cytosol"/>
    <property type="evidence" value="ECO:0007669"/>
    <property type="project" value="TreeGrafter"/>
</dbReference>
<dbReference type="GO" id="GO:0004801">
    <property type="term" value="F:transaldolase activity"/>
    <property type="evidence" value="ECO:0000250"/>
    <property type="project" value="UniProtKB"/>
</dbReference>
<dbReference type="GO" id="GO:0005975">
    <property type="term" value="P:carbohydrate metabolic process"/>
    <property type="evidence" value="ECO:0007669"/>
    <property type="project" value="InterPro"/>
</dbReference>
<dbReference type="GO" id="GO:0006098">
    <property type="term" value="P:pentose-phosphate shunt"/>
    <property type="evidence" value="ECO:0007669"/>
    <property type="project" value="UniProtKB-UniRule"/>
</dbReference>
<dbReference type="CDD" id="cd00957">
    <property type="entry name" value="Transaldolase_TalAB"/>
    <property type="match status" value="1"/>
</dbReference>
<dbReference type="FunFam" id="3.20.20.70:FF:000002">
    <property type="entry name" value="Transaldolase"/>
    <property type="match status" value="1"/>
</dbReference>
<dbReference type="Gene3D" id="3.20.20.70">
    <property type="entry name" value="Aldolase class I"/>
    <property type="match status" value="1"/>
</dbReference>
<dbReference type="HAMAP" id="MF_00492">
    <property type="entry name" value="Transaldolase_1"/>
    <property type="match status" value="1"/>
</dbReference>
<dbReference type="InterPro" id="IPR013785">
    <property type="entry name" value="Aldolase_TIM"/>
</dbReference>
<dbReference type="InterPro" id="IPR001585">
    <property type="entry name" value="TAL/FSA"/>
</dbReference>
<dbReference type="InterPro" id="IPR004730">
    <property type="entry name" value="Transaldolase_1"/>
</dbReference>
<dbReference type="InterPro" id="IPR018225">
    <property type="entry name" value="Transaldolase_AS"/>
</dbReference>
<dbReference type="NCBIfam" id="NF009001">
    <property type="entry name" value="PRK12346.1"/>
    <property type="match status" value="1"/>
</dbReference>
<dbReference type="NCBIfam" id="TIGR00874">
    <property type="entry name" value="talAB"/>
    <property type="match status" value="1"/>
</dbReference>
<dbReference type="PANTHER" id="PTHR10683">
    <property type="entry name" value="TRANSALDOLASE"/>
    <property type="match status" value="1"/>
</dbReference>
<dbReference type="PANTHER" id="PTHR10683:SF18">
    <property type="entry name" value="TRANSALDOLASE"/>
    <property type="match status" value="1"/>
</dbReference>
<dbReference type="Pfam" id="PF00923">
    <property type="entry name" value="TAL_FSA"/>
    <property type="match status" value="1"/>
</dbReference>
<dbReference type="SUPFAM" id="SSF51569">
    <property type="entry name" value="Aldolase"/>
    <property type="match status" value="1"/>
</dbReference>
<dbReference type="PROSITE" id="PS01054">
    <property type="entry name" value="TRANSALDOLASE_1"/>
    <property type="match status" value="1"/>
</dbReference>
<dbReference type="PROSITE" id="PS00958">
    <property type="entry name" value="TRANSALDOLASE_2"/>
    <property type="match status" value="1"/>
</dbReference>
<feature type="chain" id="PRO_1000014482" description="Transaldolase">
    <location>
        <begin position="1"/>
        <end position="315"/>
    </location>
</feature>
<feature type="active site" description="Schiff-base intermediate with substrate" evidence="2">
    <location>
        <position position="131"/>
    </location>
</feature>
<comment type="function">
    <text evidence="2">Transaldolase is important for the balance of metabolites in the pentose-phosphate pathway.</text>
</comment>
<comment type="catalytic activity">
    <reaction evidence="2">
        <text>D-sedoheptulose 7-phosphate + D-glyceraldehyde 3-phosphate = D-erythrose 4-phosphate + beta-D-fructose 6-phosphate</text>
        <dbReference type="Rhea" id="RHEA:17053"/>
        <dbReference type="ChEBI" id="CHEBI:16897"/>
        <dbReference type="ChEBI" id="CHEBI:57483"/>
        <dbReference type="ChEBI" id="CHEBI:57634"/>
        <dbReference type="ChEBI" id="CHEBI:59776"/>
        <dbReference type="EC" id="2.2.1.2"/>
    </reaction>
</comment>
<comment type="pathway">
    <text evidence="2">Carbohydrate degradation; pentose phosphate pathway; D-glyceraldehyde 3-phosphate and beta-D-fructose 6-phosphate from D-ribose 5-phosphate and D-xylulose 5-phosphate (non-oxidative stage): step 2/3.</text>
</comment>
<comment type="subunit">
    <text evidence="1">Homodimer.</text>
</comment>
<comment type="subcellular location">
    <subcellularLocation>
        <location evidence="2">Cytoplasm</location>
    </subcellularLocation>
</comment>
<comment type="similarity">
    <text evidence="2">Belongs to the transaldolase family. Type 1 subfamily.</text>
</comment>
<organism>
    <name type="scientific">Actinobacillus pleuropneumoniae serotype 5b (strain L20)</name>
    <dbReference type="NCBI Taxonomy" id="416269"/>
    <lineage>
        <taxon>Bacteria</taxon>
        <taxon>Pseudomonadati</taxon>
        <taxon>Pseudomonadota</taxon>
        <taxon>Gammaproteobacteria</taxon>
        <taxon>Pasteurellales</taxon>
        <taxon>Pasteurellaceae</taxon>
        <taxon>Actinobacillus</taxon>
    </lineage>
</organism>
<keyword id="KW-0963">Cytoplasm</keyword>
<keyword id="KW-0570">Pentose shunt</keyword>
<keyword id="KW-1185">Reference proteome</keyword>
<keyword id="KW-0704">Schiff base</keyword>
<keyword id="KW-0808">Transferase</keyword>